<evidence type="ECO:0000255" key="1">
    <source>
        <dbReference type="HAMAP-Rule" id="MF_01077"/>
    </source>
</evidence>
<accession>C1CCT4</accession>
<sequence>MDAIATIVELVREVVEPVIEAPFELVDIEYGKIGSDMILSIFVDKPEGITLNDTADLTEMISPVLDTIKPDPFPEQYFLEITSPGLERPLKTKDAVAGAVGKYIHVGLYQAIDKQKVFEGTLLAFEEDELTMEYMDKTRKKTVQIPYSLVSKARLAVKL</sequence>
<comment type="function">
    <text evidence="1">Required for maturation of 30S ribosomal subunits.</text>
</comment>
<comment type="subcellular location">
    <subcellularLocation>
        <location evidence="1">Cytoplasm</location>
    </subcellularLocation>
</comment>
<comment type="similarity">
    <text evidence="1">Belongs to the RimP family.</text>
</comment>
<dbReference type="EMBL" id="CP000919">
    <property type="protein sequence ID" value="ACO18581.1"/>
    <property type="molecule type" value="Genomic_DNA"/>
</dbReference>
<dbReference type="RefSeq" id="WP_001808916.1">
    <property type="nucleotide sequence ID" value="NC_012466.1"/>
</dbReference>
<dbReference type="SMR" id="C1CCT4"/>
<dbReference type="KEGG" id="sjj:SPJ_0512"/>
<dbReference type="HOGENOM" id="CLU_070525_2_0_9"/>
<dbReference type="Proteomes" id="UP000002206">
    <property type="component" value="Chromosome"/>
</dbReference>
<dbReference type="GO" id="GO:0005829">
    <property type="term" value="C:cytosol"/>
    <property type="evidence" value="ECO:0007669"/>
    <property type="project" value="TreeGrafter"/>
</dbReference>
<dbReference type="GO" id="GO:0000028">
    <property type="term" value="P:ribosomal small subunit assembly"/>
    <property type="evidence" value="ECO:0007669"/>
    <property type="project" value="TreeGrafter"/>
</dbReference>
<dbReference type="GO" id="GO:0006412">
    <property type="term" value="P:translation"/>
    <property type="evidence" value="ECO:0007669"/>
    <property type="project" value="TreeGrafter"/>
</dbReference>
<dbReference type="CDD" id="cd01734">
    <property type="entry name" value="YlxS_C"/>
    <property type="match status" value="1"/>
</dbReference>
<dbReference type="Gene3D" id="2.30.30.180">
    <property type="entry name" value="Ribosome maturation factor RimP, C-terminal domain"/>
    <property type="match status" value="1"/>
</dbReference>
<dbReference type="Gene3D" id="3.30.300.70">
    <property type="entry name" value="RimP-like superfamily, N-terminal"/>
    <property type="match status" value="1"/>
</dbReference>
<dbReference type="HAMAP" id="MF_01077">
    <property type="entry name" value="RimP"/>
    <property type="match status" value="1"/>
</dbReference>
<dbReference type="InterPro" id="IPR003728">
    <property type="entry name" value="Ribosome_maturation_RimP"/>
</dbReference>
<dbReference type="InterPro" id="IPR028998">
    <property type="entry name" value="RimP_C"/>
</dbReference>
<dbReference type="InterPro" id="IPR036847">
    <property type="entry name" value="RimP_C_sf"/>
</dbReference>
<dbReference type="InterPro" id="IPR028989">
    <property type="entry name" value="RimP_N"/>
</dbReference>
<dbReference type="InterPro" id="IPR035956">
    <property type="entry name" value="RimP_N_sf"/>
</dbReference>
<dbReference type="NCBIfam" id="NF000928">
    <property type="entry name" value="PRK00092.1-2"/>
    <property type="match status" value="1"/>
</dbReference>
<dbReference type="PANTHER" id="PTHR33867">
    <property type="entry name" value="RIBOSOME MATURATION FACTOR RIMP"/>
    <property type="match status" value="1"/>
</dbReference>
<dbReference type="PANTHER" id="PTHR33867:SF1">
    <property type="entry name" value="RIBOSOME MATURATION FACTOR RIMP"/>
    <property type="match status" value="1"/>
</dbReference>
<dbReference type="Pfam" id="PF17384">
    <property type="entry name" value="DUF150_C"/>
    <property type="match status" value="1"/>
</dbReference>
<dbReference type="Pfam" id="PF02576">
    <property type="entry name" value="RimP_N"/>
    <property type="match status" value="1"/>
</dbReference>
<dbReference type="SUPFAM" id="SSF74942">
    <property type="entry name" value="YhbC-like, C-terminal domain"/>
    <property type="match status" value="1"/>
</dbReference>
<dbReference type="SUPFAM" id="SSF75420">
    <property type="entry name" value="YhbC-like, N-terminal domain"/>
    <property type="match status" value="1"/>
</dbReference>
<keyword id="KW-0963">Cytoplasm</keyword>
<keyword id="KW-0690">Ribosome biogenesis</keyword>
<protein>
    <recommendedName>
        <fullName evidence="1">Ribosome maturation factor RimP</fullName>
    </recommendedName>
</protein>
<gene>
    <name evidence="1" type="primary">rimP</name>
    <name type="ordered locus">SPJ_0512</name>
</gene>
<reference key="1">
    <citation type="journal article" date="2010" name="Genome Biol.">
        <title>Structure and dynamics of the pan-genome of Streptococcus pneumoniae and closely related species.</title>
        <authorList>
            <person name="Donati C."/>
            <person name="Hiller N.L."/>
            <person name="Tettelin H."/>
            <person name="Muzzi A."/>
            <person name="Croucher N.J."/>
            <person name="Angiuoli S.V."/>
            <person name="Oggioni M."/>
            <person name="Dunning Hotopp J.C."/>
            <person name="Hu F.Z."/>
            <person name="Riley D.R."/>
            <person name="Covacci A."/>
            <person name="Mitchell T.J."/>
            <person name="Bentley S.D."/>
            <person name="Kilian M."/>
            <person name="Ehrlich G.D."/>
            <person name="Rappuoli R."/>
            <person name="Moxon E.R."/>
            <person name="Masignani V."/>
        </authorList>
    </citation>
    <scope>NUCLEOTIDE SEQUENCE [LARGE SCALE GENOMIC DNA]</scope>
    <source>
        <strain>JJA</strain>
    </source>
</reference>
<feature type="chain" id="PRO_1000149807" description="Ribosome maturation factor RimP">
    <location>
        <begin position="1"/>
        <end position="159"/>
    </location>
</feature>
<proteinExistence type="inferred from homology"/>
<name>RIMP_STRZJ</name>
<organism>
    <name type="scientific">Streptococcus pneumoniae (strain JJA)</name>
    <dbReference type="NCBI Taxonomy" id="488222"/>
    <lineage>
        <taxon>Bacteria</taxon>
        <taxon>Bacillati</taxon>
        <taxon>Bacillota</taxon>
        <taxon>Bacilli</taxon>
        <taxon>Lactobacillales</taxon>
        <taxon>Streptococcaceae</taxon>
        <taxon>Streptococcus</taxon>
    </lineage>
</organism>